<organism>
    <name type="scientific">Shewanella denitrificans (strain OS217 / ATCC BAA-1090 / DSM 15013)</name>
    <dbReference type="NCBI Taxonomy" id="318161"/>
    <lineage>
        <taxon>Bacteria</taxon>
        <taxon>Pseudomonadati</taxon>
        <taxon>Pseudomonadota</taxon>
        <taxon>Gammaproteobacteria</taxon>
        <taxon>Alteromonadales</taxon>
        <taxon>Shewanellaceae</taxon>
        <taxon>Shewanella</taxon>
    </lineage>
</organism>
<sequence length="388" mass="42543">MKFIDEASIRVEAGDGGSGCVSFRREKYVPDGGPDGGDGGDGGSVFLQADENYNTLIDYRFERFHMAERGSNGRGRDCTGHGGVDLILKVPVGTRAVDDETQELIGDLTAHGQKLLVAKGGFHGLGNTRFKSSTNRAPRQKTLGTPGEVRSLRLELLLLADVGLLGMPNAGKSTFIRAVSRATPKVADYPFTTLVPNLGVVNPRPGQSFVIADIPGLIEGASDGAGLGIRFLKHLERCRVLLHILDIDPIDGSSPAEAAKAIVAELEKYSPKLAAKPRWLVFNKTDLMLEEDLQERVDAIVAEMDWQGDVYTMSAFNRIGTKELSLKLLDYIASLPPIDDSIDPDSEVEFKWDNYHEANTDSVNEDYNDDFDDDFDDDDYDVEVIYQR</sequence>
<keyword id="KW-0963">Cytoplasm</keyword>
<keyword id="KW-0342">GTP-binding</keyword>
<keyword id="KW-0378">Hydrolase</keyword>
<keyword id="KW-0460">Magnesium</keyword>
<keyword id="KW-0479">Metal-binding</keyword>
<keyword id="KW-0547">Nucleotide-binding</keyword>
<keyword id="KW-1185">Reference proteome</keyword>
<accession>Q12K23</accession>
<evidence type="ECO:0000255" key="1">
    <source>
        <dbReference type="HAMAP-Rule" id="MF_01454"/>
    </source>
</evidence>
<evidence type="ECO:0000255" key="2">
    <source>
        <dbReference type="PROSITE-ProRule" id="PRU01231"/>
    </source>
</evidence>
<feature type="chain" id="PRO_0000386240" description="GTPase Obg">
    <location>
        <begin position="1"/>
        <end position="388"/>
    </location>
</feature>
<feature type="domain" description="Obg" evidence="2">
    <location>
        <begin position="1"/>
        <end position="159"/>
    </location>
</feature>
<feature type="domain" description="OBG-type G" evidence="1">
    <location>
        <begin position="160"/>
        <end position="333"/>
    </location>
</feature>
<feature type="binding site" evidence="1">
    <location>
        <begin position="166"/>
        <end position="173"/>
    </location>
    <ligand>
        <name>GTP</name>
        <dbReference type="ChEBI" id="CHEBI:37565"/>
    </ligand>
</feature>
<feature type="binding site" evidence="1">
    <location>
        <position position="173"/>
    </location>
    <ligand>
        <name>Mg(2+)</name>
        <dbReference type="ChEBI" id="CHEBI:18420"/>
    </ligand>
</feature>
<feature type="binding site" evidence="1">
    <location>
        <begin position="191"/>
        <end position="195"/>
    </location>
    <ligand>
        <name>GTP</name>
        <dbReference type="ChEBI" id="CHEBI:37565"/>
    </ligand>
</feature>
<feature type="binding site" evidence="1">
    <location>
        <position position="193"/>
    </location>
    <ligand>
        <name>Mg(2+)</name>
        <dbReference type="ChEBI" id="CHEBI:18420"/>
    </ligand>
</feature>
<feature type="binding site" evidence="1">
    <location>
        <begin position="213"/>
        <end position="216"/>
    </location>
    <ligand>
        <name>GTP</name>
        <dbReference type="ChEBI" id="CHEBI:37565"/>
    </ligand>
</feature>
<feature type="binding site" evidence="1">
    <location>
        <begin position="283"/>
        <end position="286"/>
    </location>
    <ligand>
        <name>GTP</name>
        <dbReference type="ChEBI" id="CHEBI:37565"/>
    </ligand>
</feature>
<feature type="binding site" evidence="1">
    <location>
        <begin position="314"/>
        <end position="316"/>
    </location>
    <ligand>
        <name>GTP</name>
        <dbReference type="ChEBI" id="CHEBI:37565"/>
    </ligand>
</feature>
<gene>
    <name evidence="1" type="primary">obg</name>
    <name type="ordered locus">Sden_2925</name>
</gene>
<protein>
    <recommendedName>
        <fullName evidence="1">GTPase Obg</fullName>
        <ecNumber evidence="1">3.6.5.-</ecNumber>
    </recommendedName>
    <alternativeName>
        <fullName evidence="1">GTP-binding protein Obg</fullName>
    </alternativeName>
</protein>
<dbReference type="EC" id="3.6.5.-" evidence="1"/>
<dbReference type="EMBL" id="CP000302">
    <property type="protein sequence ID" value="ABE56203.1"/>
    <property type="molecule type" value="Genomic_DNA"/>
</dbReference>
<dbReference type="RefSeq" id="WP_011497352.1">
    <property type="nucleotide sequence ID" value="NC_007954.1"/>
</dbReference>
<dbReference type="SMR" id="Q12K23"/>
<dbReference type="STRING" id="318161.Sden_2925"/>
<dbReference type="KEGG" id="sdn:Sden_2925"/>
<dbReference type="eggNOG" id="COG0536">
    <property type="taxonomic scope" value="Bacteria"/>
</dbReference>
<dbReference type="HOGENOM" id="CLU_011747_2_0_6"/>
<dbReference type="OrthoDB" id="9807318at2"/>
<dbReference type="Proteomes" id="UP000001982">
    <property type="component" value="Chromosome"/>
</dbReference>
<dbReference type="GO" id="GO:0005737">
    <property type="term" value="C:cytoplasm"/>
    <property type="evidence" value="ECO:0007669"/>
    <property type="project" value="UniProtKB-SubCell"/>
</dbReference>
<dbReference type="GO" id="GO:0005525">
    <property type="term" value="F:GTP binding"/>
    <property type="evidence" value="ECO:0007669"/>
    <property type="project" value="UniProtKB-UniRule"/>
</dbReference>
<dbReference type="GO" id="GO:0003924">
    <property type="term" value="F:GTPase activity"/>
    <property type="evidence" value="ECO:0007669"/>
    <property type="project" value="UniProtKB-UniRule"/>
</dbReference>
<dbReference type="GO" id="GO:0000287">
    <property type="term" value="F:magnesium ion binding"/>
    <property type="evidence" value="ECO:0007669"/>
    <property type="project" value="InterPro"/>
</dbReference>
<dbReference type="GO" id="GO:0042254">
    <property type="term" value="P:ribosome biogenesis"/>
    <property type="evidence" value="ECO:0007669"/>
    <property type="project" value="UniProtKB-UniRule"/>
</dbReference>
<dbReference type="CDD" id="cd01898">
    <property type="entry name" value="Obg"/>
    <property type="match status" value="1"/>
</dbReference>
<dbReference type="FunFam" id="2.70.210.12:FF:000001">
    <property type="entry name" value="GTPase Obg"/>
    <property type="match status" value="1"/>
</dbReference>
<dbReference type="Gene3D" id="2.70.210.12">
    <property type="entry name" value="GTP1/OBG domain"/>
    <property type="match status" value="1"/>
</dbReference>
<dbReference type="Gene3D" id="3.40.50.300">
    <property type="entry name" value="P-loop containing nucleotide triphosphate hydrolases"/>
    <property type="match status" value="1"/>
</dbReference>
<dbReference type="HAMAP" id="MF_01454">
    <property type="entry name" value="GTPase_Obg"/>
    <property type="match status" value="1"/>
</dbReference>
<dbReference type="InterPro" id="IPR031167">
    <property type="entry name" value="G_OBG"/>
</dbReference>
<dbReference type="InterPro" id="IPR006073">
    <property type="entry name" value="GTP-bd"/>
</dbReference>
<dbReference type="InterPro" id="IPR014100">
    <property type="entry name" value="GTP-bd_Obg/CgtA"/>
</dbReference>
<dbReference type="InterPro" id="IPR006074">
    <property type="entry name" value="GTP1-OBG_CS"/>
</dbReference>
<dbReference type="InterPro" id="IPR006169">
    <property type="entry name" value="GTP1_OBG_dom"/>
</dbReference>
<dbReference type="InterPro" id="IPR036726">
    <property type="entry name" value="GTP1_OBG_dom_sf"/>
</dbReference>
<dbReference type="InterPro" id="IPR045086">
    <property type="entry name" value="OBG_GTPase"/>
</dbReference>
<dbReference type="InterPro" id="IPR027417">
    <property type="entry name" value="P-loop_NTPase"/>
</dbReference>
<dbReference type="NCBIfam" id="TIGR02729">
    <property type="entry name" value="Obg_CgtA"/>
    <property type="match status" value="1"/>
</dbReference>
<dbReference type="NCBIfam" id="NF008955">
    <property type="entry name" value="PRK12297.1"/>
    <property type="match status" value="1"/>
</dbReference>
<dbReference type="NCBIfam" id="NF008956">
    <property type="entry name" value="PRK12299.1"/>
    <property type="match status" value="1"/>
</dbReference>
<dbReference type="PANTHER" id="PTHR11702">
    <property type="entry name" value="DEVELOPMENTALLY REGULATED GTP-BINDING PROTEIN-RELATED"/>
    <property type="match status" value="1"/>
</dbReference>
<dbReference type="PANTHER" id="PTHR11702:SF31">
    <property type="entry name" value="MITOCHONDRIAL RIBOSOME-ASSOCIATED GTPASE 2"/>
    <property type="match status" value="1"/>
</dbReference>
<dbReference type="Pfam" id="PF01018">
    <property type="entry name" value="GTP1_OBG"/>
    <property type="match status" value="1"/>
</dbReference>
<dbReference type="Pfam" id="PF01926">
    <property type="entry name" value="MMR_HSR1"/>
    <property type="match status" value="1"/>
</dbReference>
<dbReference type="PIRSF" id="PIRSF002401">
    <property type="entry name" value="GTP_bd_Obg/CgtA"/>
    <property type="match status" value="1"/>
</dbReference>
<dbReference type="PRINTS" id="PR00326">
    <property type="entry name" value="GTP1OBG"/>
</dbReference>
<dbReference type="SUPFAM" id="SSF82051">
    <property type="entry name" value="Obg GTP-binding protein N-terminal domain"/>
    <property type="match status" value="1"/>
</dbReference>
<dbReference type="SUPFAM" id="SSF52540">
    <property type="entry name" value="P-loop containing nucleoside triphosphate hydrolases"/>
    <property type="match status" value="1"/>
</dbReference>
<dbReference type="PROSITE" id="PS51710">
    <property type="entry name" value="G_OBG"/>
    <property type="match status" value="1"/>
</dbReference>
<dbReference type="PROSITE" id="PS00905">
    <property type="entry name" value="GTP1_OBG"/>
    <property type="match status" value="1"/>
</dbReference>
<dbReference type="PROSITE" id="PS51883">
    <property type="entry name" value="OBG"/>
    <property type="match status" value="1"/>
</dbReference>
<reference key="1">
    <citation type="submission" date="2006-03" db="EMBL/GenBank/DDBJ databases">
        <title>Complete sequence of Shewanella denitrificans OS217.</title>
        <authorList>
            <consortium name="US DOE Joint Genome Institute"/>
            <person name="Copeland A."/>
            <person name="Lucas S."/>
            <person name="Lapidus A."/>
            <person name="Barry K."/>
            <person name="Detter J.C."/>
            <person name="Glavina del Rio T."/>
            <person name="Hammon N."/>
            <person name="Israni S."/>
            <person name="Dalin E."/>
            <person name="Tice H."/>
            <person name="Pitluck S."/>
            <person name="Brettin T."/>
            <person name="Bruce D."/>
            <person name="Han C."/>
            <person name="Tapia R."/>
            <person name="Gilna P."/>
            <person name="Kiss H."/>
            <person name="Schmutz J."/>
            <person name="Larimer F."/>
            <person name="Land M."/>
            <person name="Hauser L."/>
            <person name="Kyrpides N."/>
            <person name="Lykidis A."/>
            <person name="Richardson P."/>
        </authorList>
    </citation>
    <scope>NUCLEOTIDE SEQUENCE [LARGE SCALE GENOMIC DNA]</scope>
    <source>
        <strain>OS217 / ATCC BAA-1090 / DSM 15013</strain>
    </source>
</reference>
<name>OBG_SHEDO</name>
<comment type="function">
    <text evidence="1">An essential GTPase which binds GTP, GDP and possibly (p)ppGpp with moderate affinity, with high nucleotide exchange rates and a fairly low GTP hydrolysis rate. Plays a role in control of the cell cycle, stress response, ribosome biogenesis and in those bacteria that undergo differentiation, in morphogenesis control.</text>
</comment>
<comment type="cofactor">
    <cofactor evidence="1">
        <name>Mg(2+)</name>
        <dbReference type="ChEBI" id="CHEBI:18420"/>
    </cofactor>
</comment>
<comment type="subunit">
    <text evidence="1">Monomer.</text>
</comment>
<comment type="subcellular location">
    <subcellularLocation>
        <location evidence="1">Cytoplasm</location>
    </subcellularLocation>
</comment>
<comment type="similarity">
    <text evidence="1">Belongs to the TRAFAC class OBG-HflX-like GTPase superfamily. OBG GTPase family.</text>
</comment>
<proteinExistence type="inferred from homology"/>